<dbReference type="EMBL" id="CP017627">
    <property type="protein sequence ID" value="AOW29493.1"/>
    <property type="molecule type" value="Genomic_DNA"/>
</dbReference>
<dbReference type="RefSeq" id="XP_716779.1">
    <property type="nucleotide sequence ID" value="XM_711686.1"/>
</dbReference>
<dbReference type="FunCoup" id="Q5A506">
    <property type="interactions" value="90"/>
</dbReference>
<dbReference type="STRING" id="237561.Q5A506"/>
<dbReference type="EnsemblFungi" id="C5_00490C_A-T">
    <property type="protein sequence ID" value="C5_00490C_A-T-p1"/>
    <property type="gene ID" value="C5_00490C_A"/>
</dbReference>
<dbReference type="GeneID" id="3641541"/>
<dbReference type="KEGG" id="cal:CAALFM_C500490CA"/>
<dbReference type="CGD" id="CAL0000199838">
    <property type="gene designation" value="BUD2"/>
</dbReference>
<dbReference type="VEuPathDB" id="FungiDB:C5_00490C_A"/>
<dbReference type="eggNOG" id="KOG3508">
    <property type="taxonomic scope" value="Eukaryota"/>
</dbReference>
<dbReference type="HOGENOM" id="CLU_002973_1_0_1"/>
<dbReference type="InParanoid" id="Q5A506"/>
<dbReference type="OMA" id="WFVGLNY"/>
<dbReference type="OrthoDB" id="775356at2759"/>
<dbReference type="PRO" id="PR:Q5A506"/>
<dbReference type="Proteomes" id="UP000000559">
    <property type="component" value="Chromosome 5"/>
</dbReference>
<dbReference type="GO" id="GO:0005938">
    <property type="term" value="C:cell cortex"/>
    <property type="evidence" value="ECO:0007669"/>
    <property type="project" value="UniProtKB-SubCell"/>
</dbReference>
<dbReference type="GO" id="GO:0030428">
    <property type="term" value="C:cell septum"/>
    <property type="evidence" value="ECO:0007669"/>
    <property type="project" value="UniProtKB-SubCell"/>
</dbReference>
<dbReference type="GO" id="GO:0005935">
    <property type="term" value="C:cellular bud neck"/>
    <property type="evidence" value="ECO:0000314"/>
    <property type="project" value="CGD"/>
</dbReference>
<dbReference type="GO" id="GO:0009277">
    <property type="term" value="C:fungal-type cell wall"/>
    <property type="evidence" value="ECO:0000314"/>
    <property type="project" value="CGD"/>
</dbReference>
<dbReference type="GO" id="GO:0001411">
    <property type="term" value="C:hyphal tip"/>
    <property type="evidence" value="ECO:0000314"/>
    <property type="project" value="CGD"/>
</dbReference>
<dbReference type="GO" id="GO:0000131">
    <property type="term" value="C:incipient cellular bud site"/>
    <property type="evidence" value="ECO:0000314"/>
    <property type="project" value="CGD"/>
</dbReference>
<dbReference type="GO" id="GO:0005096">
    <property type="term" value="F:GTPase activator activity"/>
    <property type="evidence" value="ECO:0000315"/>
    <property type="project" value="CGD"/>
</dbReference>
<dbReference type="GO" id="GO:0051666">
    <property type="term" value="P:actin cortical patch localization"/>
    <property type="evidence" value="ECO:0000315"/>
    <property type="project" value="CGD"/>
</dbReference>
<dbReference type="GO" id="GO:0007015">
    <property type="term" value="P:actin filament organization"/>
    <property type="evidence" value="ECO:0000315"/>
    <property type="project" value="CGD"/>
</dbReference>
<dbReference type="GO" id="GO:0007155">
    <property type="term" value="P:cell adhesion"/>
    <property type="evidence" value="ECO:0007669"/>
    <property type="project" value="UniProtKB-KW"/>
</dbReference>
<dbReference type="GO" id="GO:0000282">
    <property type="term" value="P:cellular bud site selection"/>
    <property type="evidence" value="ECO:0000315"/>
    <property type="project" value="CGD"/>
</dbReference>
<dbReference type="GO" id="GO:0071257">
    <property type="term" value="P:cellular response to electrical stimulus"/>
    <property type="evidence" value="ECO:0000315"/>
    <property type="project" value="CGD"/>
</dbReference>
<dbReference type="GO" id="GO:0030448">
    <property type="term" value="P:hyphal growth"/>
    <property type="evidence" value="ECO:0000315"/>
    <property type="project" value="CGD"/>
</dbReference>
<dbReference type="GO" id="GO:0030011">
    <property type="term" value="P:maintenance of cell polarity"/>
    <property type="evidence" value="ECO:0000315"/>
    <property type="project" value="CGD"/>
</dbReference>
<dbReference type="GO" id="GO:0007264">
    <property type="term" value="P:small GTPase-mediated signal transduction"/>
    <property type="evidence" value="ECO:0000315"/>
    <property type="project" value="CGD"/>
</dbReference>
<dbReference type="GO" id="GO:0009652">
    <property type="term" value="P:thigmotropism"/>
    <property type="evidence" value="ECO:0000315"/>
    <property type="project" value="CGD"/>
</dbReference>
<dbReference type="CDD" id="cd00030">
    <property type="entry name" value="C2"/>
    <property type="match status" value="1"/>
</dbReference>
<dbReference type="CDD" id="cd05137">
    <property type="entry name" value="RasGAP_CLA2_BUD2"/>
    <property type="match status" value="1"/>
</dbReference>
<dbReference type="Gene3D" id="2.60.40.150">
    <property type="entry name" value="C2 domain"/>
    <property type="match status" value="1"/>
</dbReference>
<dbReference type="Gene3D" id="1.10.506.10">
    <property type="entry name" value="GTPase Activation - p120gap, domain 1"/>
    <property type="match status" value="1"/>
</dbReference>
<dbReference type="InterPro" id="IPR000008">
    <property type="entry name" value="C2_dom"/>
</dbReference>
<dbReference type="InterPro" id="IPR035892">
    <property type="entry name" value="C2_domain_sf"/>
</dbReference>
<dbReference type="InterPro" id="IPR039360">
    <property type="entry name" value="Ras_GTPase"/>
</dbReference>
<dbReference type="InterPro" id="IPR023152">
    <property type="entry name" value="RasGAP_CS"/>
</dbReference>
<dbReference type="InterPro" id="IPR001936">
    <property type="entry name" value="RasGAP_dom"/>
</dbReference>
<dbReference type="InterPro" id="IPR008936">
    <property type="entry name" value="Rho_GTPase_activation_prot"/>
</dbReference>
<dbReference type="PANTHER" id="PTHR10194:SF60">
    <property type="entry name" value="RAS GTPASE-ACTIVATING PROTEIN RASKOL"/>
    <property type="match status" value="1"/>
</dbReference>
<dbReference type="PANTHER" id="PTHR10194">
    <property type="entry name" value="RAS GTPASE-ACTIVATING PROTEINS"/>
    <property type="match status" value="1"/>
</dbReference>
<dbReference type="Pfam" id="PF00168">
    <property type="entry name" value="C2"/>
    <property type="match status" value="1"/>
</dbReference>
<dbReference type="Pfam" id="PF00616">
    <property type="entry name" value="RasGAP"/>
    <property type="match status" value="1"/>
</dbReference>
<dbReference type="SMART" id="SM00239">
    <property type="entry name" value="C2"/>
    <property type="match status" value="1"/>
</dbReference>
<dbReference type="SMART" id="SM00323">
    <property type="entry name" value="RasGAP"/>
    <property type="match status" value="1"/>
</dbReference>
<dbReference type="SUPFAM" id="SSF49562">
    <property type="entry name" value="C2 domain (Calcium/lipid-binding domain, CaLB)"/>
    <property type="match status" value="1"/>
</dbReference>
<dbReference type="SUPFAM" id="SSF48350">
    <property type="entry name" value="GTPase activation domain, GAP"/>
    <property type="match status" value="1"/>
</dbReference>
<dbReference type="PROSITE" id="PS50004">
    <property type="entry name" value="C2"/>
    <property type="match status" value="1"/>
</dbReference>
<dbReference type="PROSITE" id="PS00509">
    <property type="entry name" value="RAS_GTPASE_ACTIV_1"/>
    <property type="match status" value="1"/>
</dbReference>
<dbReference type="PROSITE" id="PS50018">
    <property type="entry name" value="RAS_GTPASE_ACTIV_2"/>
    <property type="match status" value="1"/>
</dbReference>
<protein>
    <recommendedName>
        <fullName>GTPase activating protein BUD2</fullName>
    </recommendedName>
    <alternativeName>
        <fullName>Bud site selection protein 2</fullName>
    </alternativeName>
</protein>
<name>BUD2_CANAL</name>
<proteinExistence type="evidence at transcript level"/>
<feature type="chain" id="PRO_0000422801" description="GTPase activating protein BUD2">
    <location>
        <begin position="1"/>
        <end position="1237"/>
    </location>
</feature>
<feature type="domain" description="C2" evidence="2">
    <location>
        <begin position="381"/>
        <end position="503"/>
    </location>
</feature>
<feature type="domain" description="Ras-GAP" evidence="3">
    <location>
        <begin position="637"/>
        <end position="905"/>
    </location>
</feature>
<feature type="region of interest" description="Disordered" evidence="4">
    <location>
        <begin position="79"/>
        <end position="124"/>
    </location>
</feature>
<feature type="region of interest" description="Disordered" evidence="4">
    <location>
        <begin position="721"/>
        <end position="762"/>
    </location>
</feature>
<feature type="region of interest" description="Disordered" evidence="4">
    <location>
        <begin position="969"/>
        <end position="1007"/>
    </location>
</feature>
<feature type="region of interest" description="Disordered" evidence="4">
    <location>
        <begin position="1170"/>
        <end position="1204"/>
    </location>
</feature>
<feature type="coiled-coil region" evidence="1">
    <location>
        <begin position="1065"/>
        <end position="1093"/>
    </location>
</feature>
<feature type="compositionally biased region" description="Low complexity" evidence="4">
    <location>
        <begin position="79"/>
        <end position="110"/>
    </location>
</feature>
<feature type="compositionally biased region" description="Basic and acidic residues" evidence="4">
    <location>
        <begin position="111"/>
        <end position="121"/>
    </location>
</feature>
<feature type="compositionally biased region" description="Acidic residues" evidence="4">
    <location>
        <begin position="735"/>
        <end position="754"/>
    </location>
</feature>
<feature type="compositionally biased region" description="Basic and acidic residues" evidence="4">
    <location>
        <begin position="986"/>
        <end position="996"/>
    </location>
</feature>
<feature type="compositionally biased region" description="Low complexity" evidence="4">
    <location>
        <begin position="1183"/>
        <end position="1199"/>
    </location>
</feature>
<feature type="site" description="Arginine finger; crucial for GTP hydrolysis by stabilizing the transition state" evidence="3">
    <location>
        <position position="663"/>
    </location>
</feature>
<reference key="1">
    <citation type="journal article" date="2004" name="Proc. Natl. Acad. Sci. U.S.A.">
        <title>The diploid genome sequence of Candida albicans.</title>
        <authorList>
            <person name="Jones T."/>
            <person name="Federspiel N.A."/>
            <person name="Chibana H."/>
            <person name="Dungan J."/>
            <person name="Kalman S."/>
            <person name="Magee B.B."/>
            <person name="Newport G."/>
            <person name="Thorstenson Y.R."/>
            <person name="Agabian N."/>
            <person name="Magee P.T."/>
            <person name="Davis R.W."/>
            <person name="Scherer S."/>
        </authorList>
    </citation>
    <scope>NUCLEOTIDE SEQUENCE [LARGE SCALE GENOMIC DNA]</scope>
    <source>
        <strain>SC5314 / ATCC MYA-2876</strain>
    </source>
</reference>
<reference key="2">
    <citation type="journal article" date="2007" name="Genome Biol.">
        <title>Assembly of the Candida albicans genome into sixteen supercontigs aligned on the eight chromosomes.</title>
        <authorList>
            <person name="van het Hoog M."/>
            <person name="Rast T.J."/>
            <person name="Martchenko M."/>
            <person name="Grindle S."/>
            <person name="Dignard D."/>
            <person name="Hogues H."/>
            <person name="Cuomo C."/>
            <person name="Berriman M."/>
            <person name="Scherer S."/>
            <person name="Magee B.B."/>
            <person name="Whiteway M."/>
            <person name="Chibana H."/>
            <person name="Nantel A."/>
            <person name="Magee P.T."/>
        </authorList>
    </citation>
    <scope>GENOME REANNOTATION</scope>
    <source>
        <strain>SC5314 / ATCC MYA-2876</strain>
    </source>
</reference>
<reference key="3">
    <citation type="journal article" date="2013" name="Genome Biol.">
        <title>Assembly of a phased diploid Candida albicans genome facilitates allele-specific measurements and provides a simple model for repeat and indel structure.</title>
        <authorList>
            <person name="Muzzey D."/>
            <person name="Schwartz K."/>
            <person name="Weissman J.S."/>
            <person name="Sherlock G."/>
        </authorList>
    </citation>
    <scope>NUCLEOTIDE SEQUENCE [LARGE SCALE GENOMIC DNA]</scope>
    <scope>GENOME REANNOTATION</scope>
    <source>
        <strain>SC5314 / ATCC MYA-2876</strain>
    </source>
</reference>
<reference key="4">
    <citation type="journal article" date="2004" name="Mol. Microbiol.">
        <title>Regulatory networks affected by iron availability in Candida albicans.</title>
        <authorList>
            <person name="Lan C.Y."/>
            <person name="Rodarte G."/>
            <person name="Murillo L.A."/>
            <person name="Jones T."/>
            <person name="Davis R.W."/>
            <person name="Dungan J."/>
            <person name="Newport G."/>
            <person name="Agabian N."/>
        </authorList>
    </citation>
    <scope>INDUCTION</scope>
</reference>
<reference key="5">
    <citation type="journal article" date="2005" name="Eukaryot. Cell">
        <title>Hyphal guidance and invasive growth in Candida albicans require the Ras-like GTPase Rsr1p and its GTPase-activating protein Bud2p.</title>
        <authorList>
            <person name="Hausauer D.L."/>
            <person name="Gerami-Nejad M."/>
            <person name="Kistler-Anderson C."/>
            <person name="Gale C.A."/>
        </authorList>
    </citation>
    <scope>FUNCTION</scope>
    <scope>SUBCELLULAR LOCATION</scope>
</reference>
<reference key="6">
    <citation type="journal article" date="2011" name="PLoS ONE">
        <title>From attachment to damage: defined genes of Candida albicans mediate adhesion, invasion and damage during interaction with oral epithelial cells.</title>
        <authorList>
            <person name="Wachtler B."/>
            <person name="Wilson D."/>
            <person name="Haedicke K."/>
            <person name="Dalle F."/>
            <person name="Hube B."/>
        </authorList>
    </citation>
    <scope>FUNCTION</scope>
</reference>
<reference key="7">
    <citation type="journal article" date="2013" name="Eukaryot. Cell">
        <title>Rsr1 focuses Cdc42 activity at hyphal tips and promotes maintenance of hyphal development in Candida albicans.</title>
        <authorList>
            <person name="Pulver R."/>
            <person name="Heisel T."/>
            <person name="Gonia S."/>
            <person name="Robins R."/>
            <person name="Norton J."/>
            <person name="Haynes P."/>
            <person name="Gale C.A."/>
        </authorList>
    </citation>
    <scope>FUNCTION</scope>
    <scope>SUBCELLULAR LOCATION</scope>
</reference>
<organism>
    <name type="scientific">Candida albicans (strain SC5314 / ATCC MYA-2876)</name>
    <name type="common">Yeast</name>
    <dbReference type="NCBI Taxonomy" id="237561"/>
    <lineage>
        <taxon>Eukaryota</taxon>
        <taxon>Fungi</taxon>
        <taxon>Dikarya</taxon>
        <taxon>Ascomycota</taxon>
        <taxon>Saccharomycotina</taxon>
        <taxon>Pichiomycetes</taxon>
        <taxon>Debaryomycetaceae</taxon>
        <taxon>Candida/Lodderomyces clade</taxon>
        <taxon>Candida</taxon>
    </lineage>
</organism>
<comment type="function">
    <text evidence="6 7 8">GTPase activating protein (GAP) for RSR1 which is involved in the polarization of yeast and hyphal cells. Directs the site of new daughter cell growth in yeast and hyphal cells. Important for hyphae to maintain linear growth and necessary for hyphal responses to directional cues in the environment (tropisms). Required for correct localization of the septin rings and stabilization of the polarisome at hyphal tips. Involved in cell adhesion.</text>
</comment>
<comment type="subcellular location">
    <subcellularLocation>
        <location>Cytoplasm</location>
        <location>Cell cortex</location>
    </subcellularLocation>
    <subcellularLocation>
        <location>Cell tip</location>
    </subcellularLocation>
    <subcellularLocation>
        <location>Cell septum</location>
    </subcellularLocation>
    <text>Enriched just behind the apices of hyphal tips, appearing as a faint ring at the membrane with a relatively reduced intensity at the extreme tip. Also enriched in the concave angle of some curved hyphae and shows discrete localization to septa.</text>
</comment>
<comment type="induction">
    <text evidence="5">Expression is increased in low iron conditions.</text>
</comment>
<gene>
    <name type="primary">BUD2</name>
    <name type="ordered locus">CAALFM_C500490CA</name>
    <name type="ORF">CaO19.8555</name>
    <name type="ORF">CaO19.940</name>
</gene>
<sequence length="1237" mass="142287">MPPAYQSAFHKIISRDKGVFEGHNFLVSVDTINWIHVNTLTITEQGQLFSSDSKDNHYLLLQSLQSCFIQIYPDSNISGSGKSSISQPPPTTSTRRNLLRKSSNLNSSDQSHSKSSEDNEHQPPAILIKTFDNDKLYIRIPSKANFGNLLSCLMVWQNLKPQGLAKKWYCENKVIEGFNPNAPIYELLVCRFKIYGPLPNKYKNLNIVPGPKAPVYQQKMDDFKANFDNSYIITPQISSDNHNSINEGWFYAMGALNSHGILNFISELDGTLLYSIDIKQILSSEIREMHNSIFNSSNILFIGQLKELRYNNVIRTLSTLTPDQLLTPFLTRDGKIIPNNQRILIEFPLHIDLEDWFVGLNYFAKREYIGSFDNESKLIHNVEHPQLYDFSKANFRVSKKMSIDIIEAKFENTETNKSGKIYAEVRMWGFPWSRTAIVNHTNNPFWKEEFSTDLPISTQMVHILIKKCSFNDSSYSTGDKLIGTVYVTPDILTKQIKTTSTIMTSSESSQAIQMNTVPLSSMASNSNAGLDIVRLTINDPNNIPIGKLLLEVHLQEYHILSPSVFKPLEKMLVNAPMKDLIKFCNENVPSSDFERVSLVLLDIFQSLEVEDDWFKSLMEVELVNVDIMTRKNYHQRNSQDQAVSNSKTQQQSSHNNVFNTLFRGSSIFSKSLEKYNLRIGQEYLEKVFGDFFAKISNEKKNCEVDPRYVRIQERALRKGKSIHEATGLENGQNEDVSDDDDDDDDNSSDDDADYNAEKERERNERIKQMVEENFQNLYGYVEEIWYKIYITSNDLPDQIKLQLKNFRTKVELVCDPEDKVTSLNCLSAFIFLRFFCPAILNPKLFYLAKNHQTGSTQRTLTLIAKILLNFANRQEFSPHKEPHLVRMNVFLRKHTPEIYDYFDKLTGRKNDFNEKILDLSHEVKRFDLGLDKTSNELPTTPYLIDKYLRLTEIVHLLDYSKYVKNIGNNNNGSMSNLGTPVNSPSRDMEREQDRSRSRSQSGTPDLDPILNLSDLKLNYENKYQIGSLEFEKSEFLELTGDNETEGFIKSLCKGNEEIFSFINSNITLKDIQKQSTKIMNKIQELEIYLENYEFPNNYKDQIIWDSFTDDIMNKCWLDTSRNCLIYSDHVPSSNNQYKKLVDHAFSGLKLKFNDHQKLNGNSTMNSLINNGGMGNRNGHDVNGHNNNNNNNNNNTGDGYNETDRNQRLSSTFSTISIGSAIKPNTSKNPFKKWLRKN</sequence>
<evidence type="ECO:0000255" key="1"/>
<evidence type="ECO:0000255" key="2">
    <source>
        <dbReference type="PROSITE-ProRule" id="PRU00041"/>
    </source>
</evidence>
<evidence type="ECO:0000255" key="3">
    <source>
        <dbReference type="PROSITE-ProRule" id="PRU00167"/>
    </source>
</evidence>
<evidence type="ECO:0000256" key="4">
    <source>
        <dbReference type="SAM" id="MobiDB-lite"/>
    </source>
</evidence>
<evidence type="ECO:0000269" key="5">
    <source>
    </source>
</evidence>
<evidence type="ECO:0000269" key="6">
    <source>
    </source>
</evidence>
<evidence type="ECO:0000269" key="7">
    <source>
    </source>
</evidence>
<evidence type="ECO:0000269" key="8">
    <source>
    </source>
</evidence>
<accession>Q5A506</accession>
<accession>A0A1D8PMX4</accession>
<keyword id="KW-0130">Cell adhesion</keyword>
<keyword id="KW-0175">Coiled coil</keyword>
<keyword id="KW-0963">Cytoplasm</keyword>
<keyword id="KW-0343">GTPase activation</keyword>
<keyword id="KW-1185">Reference proteome</keyword>
<keyword id="KW-0843">Virulence</keyword>